<dbReference type="EC" id="2.4.2.7" evidence="1"/>
<dbReference type="EMBL" id="DP000238">
    <property type="protein sequence ID" value="ABK77425.1"/>
    <property type="molecule type" value="Genomic_DNA"/>
</dbReference>
<dbReference type="SMR" id="A0RVQ8"/>
<dbReference type="STRING" id="414004.CENSYa_0792"/>
<dbReference type="EnsemblBacteria" id="ABK77425">
    <property type="protein sequence ID" value="ABK77425"/>
    <property type="gene ID" value="CENSYa_0792"/>
</dbReference>
<dbReference type="KEGG" id="csy:CENSYa_0792"/>
<dbReference type="PATRIC" id="fig|414004.10.peg.731"/>
<dbReference type="HOGENOM" id="CLU_063339_3_0_2"/>
<dbReference type="UniPathway" id="UPA00588">
    <property type="reaction ID" value="UER00646"/>
</dbReference>
<dbReference type="Proteomes" id="UP000000758">
    <property type="component" value="Chromosome"/>
</dbReference>
<dbReference type="GO" id="GO:0005737">
    <property type="term" value="C:cytoplasm"/>
    <property type="evidence" value="ECO:0007669"/>
    <property type="project" value="UniProtKB-SubCell"/>
</dbReference>
<dbReference type="GO" id="GO:0002055">
    <property type="term" value="F:adenine binding"/>
    <property type="evidence" value="ECO:0007669"/>
    <property type="project" value="TreeGrafter"/>
</dbReference>
<dbReference type="GO" id="GO:0003999">
    <property type="term" value="F:adenine phosphoribosyltransferase activity"/>
    <property type="evidence" value="ECO:0007669"/>
    <property type="project" value="UniProtKB-UniRule"/>
</dbReference>
<dbReference type="GO" id="GO:0016208">
    <property type="term" value="F:AMP binding"/>
    <property type="evidence" value="ECO:0007669"/>
    <property type="project" value="TreeGrafter"/>
</dbReference>
<dbReference type="GO" id="GO:0006168">
    <property type="term" value="P:adenine salvage"/>
    <property type="evidence" value="ECO:0007669"/>
    <property type="project" value="InterPro"/>
</dbReference>
<dbReference type="GO" id="GO:0044209">
    <property type="term" value="P:AMP salvage"/>
    <property type="evidence" value="ECO:0007669"/>
    <property type="project" value="UniProtKB-UniRule"/>
</dbReference>
<dbReference type="GO" id="GO:0006166">
    <property type="term" value="P:purine ribonucleoside salvage"/>
    <property type="evidence" value="ECO:0007669"/>
    <property type="project" value="UniProtKB-KW"/>
</dbReference>
<dbReference type="CDD" id="cd06223">
    <property type="entry name" value="PRTases_typeI"/>
    <property type="match status" value="1"/>
</dbReference>
<dbReference type="FunFam" id="3.40.50.2020:FF:000021">
    <property type="entry name" value="Adenine phosphoribosyltransferase"/>
    <property type="match status" value="1"/>
</dbReference>
<dbReference type="Gene3D" id="3.40.50.2020">
    <property type="match status" value="1"/>
</dbReference>
<dbReference type="HAMAP" id="MF_00004">
    <property type="entry name" value="Aden_phosphoribosyltr"/>
    <property type="match status" value="1"/>
</dbReference>
<dbReference type="InterPro" id="IPR005764">
    <property type="entry name" value="Ade_phspho_trans"/>
</dbReference>
<dbReference type="InterPro" id="IPR000836">
    <property type="entry name" value="PRibTrfase_dom"/>
</dbReference>
<dbReference type="InterPro" id="IPR029057">
    <property type="entry name" value="PRTase-like"/>
</dbReference>
<dbReference type="InterPro" id="IPR050054">
    <property type="entry name" value="UPRTase/APRTase"/>
</dbReference>
<dbReference type="NCBIfam" id="NF002634">
    <property type="entry name" value="PRK02304.1-3"/>
    <property type="match status" value="1"/>
</dbReference>
<dbReference type="NCBIfam" id="NF002636">
    <property type="entry name" value="PRK02304.1-5"/>
    <property type="match status" value="1"/>
</dbReference>
<dbReference type="PANTHER" id="PTHR32315">
    <property type="entry name" value="ADENINE PHOSPHORIBOSYLTRANSFERASE"/>
    <property type="match status" value="1"/>
</dbReference>
<dbReference type="PANTHER" id="PTHR32315:SF3">
    <property type="entry name" value="ADENINE PHOSPHORIBOSYLTRANSFERASE"/>
    <property type="match status" value="1"/>
</dbReference>
<dbReference type="Pfam" id="PF00156">
    <property type="entry name" value="Pribosyltran"/>
    <property type="match status" value="1"/>
</dbReference>
<dbReference type="SUPFAM" id="SSF53271">
    <property type="entry name" value="PRTase-like"/>
    <property type="match status" value="1"/>
</dbReference>
<dbReference type="PROSITE" id="PS00103">
    <property type="entry name" value="PUR_PYR_PR_TRANSFER"/>
    <property type="match status" value="1"/>
</dbReference>
<accession>A0RVQ8</accession>
<comment type="function">
    <text evidence="1">Catalyzes a salvage reaction resulting in the formation of AMP, that is energically less costly than de novo synthesis.</text>
</comment>
<comment type="catalytic activity">
    <reaction evidence="1">
        <text>AMP + diphosphate = 5-phospho-alpha-D-ribose 1-diphosphate + adenine</text>
        <dbReference type="Rhea" id="RHEA:16609"/>
        <dbReference type="ChEBI" id="CHEBI:16708"/>
        <dbReference type="ChEBI" id="CHEBI:33019"/>
        <dbReference type="ChEBI" id="CHEBI:58017"/>
        <dbReference type="ChEBI" id="CHEBI:456215"/>
        <dbReference type="EC" id="2.4.2.7"/>
    </reaction>
</comment>
<comment type="pathway">
    <text evidence="1">Purine metabolism; AMP biosynthesis via salvage pathway; AMP from adenine: step 1/1.</text>
</comment>
<comment type="subunit">
    <text evidence="1">Homodimer.</text>
</comment>
<comment type="subcellular location">
    <subcellularLocation>
        <location evidence="1">Cytoplasm</location>
    </subcellularLocation>
</comment>
<comment type="similarity">
    <text evidence="1">Belongs to the purine/pyrimidine phosphoribosyltransferase family.</text>
</comment>
<protein>
    <recommendedName>
        <fullName evidence="1">Adenine phosphoribosyltransferase</fullName>
        <shortName evidence="1">APRT</shortName>
        <ecNumber evidence="1">2.4.2.7</ecNumber>
    </recommendedName>
</protein>
<keyword id="KW-0963">Cytoplasm</keyword>
<keyword id="KW-0328">Glycosyltransferase</keyword>
<keyword id="KW-0660">Purine salvage</keyword>
<keyword id="KW-1185">Reference proteome</keyword>
<keyword id="KW-0808">Transferase</keyword>
<feature type="chain" id="PRO_1000000272" description="Adenine phosphoribosyltransferase">
    <location>
        <begin position="1"/>
        <end position="170"/>
    </location>
</feature>
<name>APT_CENSY</name>
<gene>
    <name evidence="1" type="primary">apt</name>
    <name type="ordered locus">CENSYa_0792</name>
</gene>
<sequence length="170" mass="18057">MDLEAMLASYPDFPKKGVLFKDIGPILRDPAALAWAADELLRRYPPADFDVIAGIESRGFILATIMSARSGKGMVMIRKPGKLPGKTVKLAYKTEYGEDILEAQHGSVKSGERVIICDDLLATGGTAAAAASLVEQVGGKVAGLAFIVELAKLCGADKIAGYNRKSLVVY</sequence>
<organism>
    <name type="scientific">Cenarchaeum symbiosum (strain A)</name>
    <dbReference type="NCBI Taxonomy" id="414004"/>
    <lineage>
        <taxon>Archaea</taxon>
        <taxon>Nitrososphaerota</taxon>
        <taxon>Candidatus Cenarchaeales</taxon>
        <taxon>Candidatus Cenarchaeaceae</taxon>
        <taxon>Candidatus Cenarchaeum</taxon>
    </lineage>
</organism>
<reference key="1">
    <citation type="journal article" date="2006" name="Proc. Natl. Acad. Sci. U.S.A.">
        <title>Genomic analysis of the uncultivated marine crenarchaeote Cenarchaeum symbiosum.</title>
        <authorList>
            <person name="Hallam S.J."/>
            <person name="Konstantinidis K.T."/>
            <person name="Putnam N."/>
            <person name="Schleper C."/>
            <person name="Watanabe Y."/>
            <person name="Sugahara J."/>
            <person name="Preston C."/>
            <person name="de la Torre J."/>
            <person name="Richardson P.M."/>
            <person name="DeLong E.F."/>
        </authorList>
    </citation>
    <scope>NUCLEOTIDE SEQUENCE [LARGE SCALE GENOMIC DNA]</scope>
    <source>
        <strain>A</strain>
    </source>
</reference>
<evidence type="ECO:0000255" key="1">
    <source>
        <dbReference type="HAMAP-Rule" id="MF_00004"/>
    </source>
</evidence>
<proteinExistence type="inferred from homology"/>